<proteinExistence type="inferred from homology"/>
<gene>
    <name evidence="1" type="primary">ulaG</name>
    <name type="ordered locus">STM4382</name>
</gene>
<comment type="function">
    <text evidence="1">Probably catalyzes the hydrolysis of L-ascorbate-6-P into 3-keto-L-gulonate-6-P. Is essential for L-ascorbate utilization under anaerobic conditions.</text>
</comment>
<comment type="catalytic activity">
    <reaction evidence="1">
        <text>L-ascorbate 6-phosphate + H2O = 3-dehydro-L-gulonate 6-phosphate</text>
        <dbReference type="Rhea" id="RHEA:28803"/>
        <dbReference type="ChEBI" id="CHEBI:15377"/>
        <dbReference type="ChEBI" id="CHEBI:58774"/>
        <dbReference type="ChEBI" id="CHEBI:61698"/>
    </reaction>
</comment>
<comment type="cofactor">
    <cofactor evidence="1">
        <name>a divalent metal cation</name>
        <dbReference type="ChEBI" id="CHEBI:60240"/>
    </cofactor>
</comment>
<comment type="pathway">
    <text evidence="1">Cofactor degradation; L-ascorbate degradation; D-xylulose 5-phosphate from L-ascorbate: step 1/4.</text>
</comment>
<comment type="subcellular location">
    <subcellularLocation>
        <location evidence="1">Cytoplasm</location>
    </subcellularLocation>
</comment>
<comment type="induction">
    <text evidence="1">Induced by L-ascorbate. Repressed by UlaR.</text>
</comment>
<comment type="similarity">
    <text evidence="1">Belongs to the UlaG family.</text>
</comment>
<reference key="1">
    <citation type="journal article" date="2001" name="Nature">
        <title>Complete genome sequence of Salmonella enterica serovar Typhimurium LT2.</title>
        <authorList>
            <person name="McClelland M."/>
            <person name="Sanderson K.E."/>
            <person name="Spieth J."/>
            <person name="Clifton S.W."/>
            <person name="Latreille P."/>
            <person name="Courtney L."/>
            <person name="Porwollik S."/>
            <person name="Ali J."/>
            <person name="Dante M."/>
            <person name="Du F."/>
            <person name="Hou S."/>
            <person name="Layman D."/>
            <person name="Leonard S."/>
            <person name="Nguyen C."/>
            <person name="Scott K."/>
            <person name="Holmes A."/>
            <person name="Grewal N."/>
            <person name="Mulvaney E."/>
            <person name="Ryan E."/>
            <person name="Sun H."/>
            <person name="Florea L."/>
            <person name="Miller W."/>
            <person name="Stoneking T."/>
            <person name="Nhan M."/>
            <person name="Waterston R."/>
            <person name="Wilson R.K."/>
        </authorList>
    </citation>
    <scope>NUCLEOTIDE SEQUENCE [LARGE SCALE GENOMIC DNA]</scope>
    <source>
        <strain>LT2 / SGSC1412 / ATCC 700720</strain>
    </source>
</reference>
<name>ULAG_SALTY</name>
<protein>
    <recommendedName>
        <fullName evidence="1">Probable L-ascorbate-6-phosphate lactonase UlaG</fullName>
        <ecNumber evidence="1">3.1.1.-</ecNumber>
    </recommendedName>
    <alternativeName>
        <fullName evidence="1">L-ascorbate utilization protein G</fullName>
    </alternativeName>
</protein>
<evidence type="ECO:0000255" key="1">
    <source>
        <dbReference type="HAMAP-Rule" id="MF_01266"/>
    </source>
</evidence>
<accession>Q7CP92</accession>
<keyword id="KW-0963">Cytoplasm</keyword>
<keyword id="KW-0378">Hydrolase</keyword>
<keyword id="KW-1185">Reference proteome</keyword>
<organism>
    <name type="scientific">Salmonella typhimurium (strain LT2 / SGSC1412 / ATCC 700720)</name>
    <dbReference type="NCBI Taxonomy" id="99287"/>
    <lineage>
        <taxon>Bacteria</taxon>
        <taxon>Pseudomonadati</taxon>
        <taxon>Pseudomonadota</taxon>
        <taxon>Gammaproteobacteria</taxon>
        <taxon>Enterobacterales</taxon>
        <taxon>Enterobacteriaceae</taxon>
        <taxon>Salmonella</taxon>
    </lineage>
</organism>
<sequence length="354" mass="40073">MSKVQSITRESWILSTFPEWGSWLNEEIEQEQVAPGTFAMWWLGCTGIWLKSEGGTNVCVDFWCGTGKQSHGNPLMKTGHQMQRMAGVKKLQPNLRTTPFVLDPFAIRQIDAVLATHDHNDHIDVNVAAAVMQNCADDVPFIGPQTCVDLWVGWGVPKERCIVVKPGDVVKVKDIEIHALDAFDRTALITLPADQKAAGVLPDGMDVRAVNYLFKTPGGNLYHSGDSHYSNYYAKHGNEHQIDVALGSYGENPRGITDKMTSADILRMAESLNTKVVIPFHHDIWSNFQADPQEIRVLWEMKKDRLKYGFKPFIWQVGGKFTWPLDKDNFEYHYPRGFDDCFTIEPDLPFKSFL</sequence>
<feature type="chain" id="PRO_0000231488" description="Probable L-ascorbate-6-phosphate lactonase UlaG">
    <location>
        <begin position="1"/>
        <end position="354"/>
    </location>
</feature>
<dbReference type="EC" id="3.1.1.-" evidence="1"/>
<dbReference type="EMBL" id="AE006468">
    <property type="protein sequence ID" value="AAL23202.1"/>
    <property type="molecule type" value="Genomic_DNA"/>
</dbReference>
<dbReference type="RefSeq" id="WP_000049161.1">
    <property type="nucleotide sequence ID" value="NC_003197.2"/>
</dbReference>
<dbReference type="SMR" id="Q7CP92"/>
<dbReference type="STRING" id="99287.STM4382"/>
<dbReference type="PaxDb" id="99287-STM4382"/>
<dbReference type="GeneID" id="66758606"/>
<dbReference type="KEGG" id="stm:STM4382"/>
<dbReference type="PATRIC" id="fig|99287.12.peg.4607"/>
<dbReference type="HOGENOM" id="CLU_074775_0_0_6"/>
<dbReference type="OMA" id="HWDMWKG"/>
<dbReference type="PhylomeDB" id="Q7CP92"/>
<dbReference type="BioCyc" id="SENT99287:STM4382-MONOMER"/>
<dbReference type="UniPathway" id="UPA00263">
    <property type="reaction ID" value="UER00377"/>
</dbReference>
<dbReference type="Proteomes" id="UP000001014">
    <property type="component" value="Chromosome"/>
</dbReference>
<dbReference type="GO" id="GO:0005737">
    <property type="term" value="C:cytoplasm"/>
    <property type="evidence" value="ECO:0007669"/>
    <property type="project" value="UniProtKB-SubCell"/>
</dbReference>
<dbReference type="GO" id="GO:0016787">
    <property type="term" value="F:hydrolase activity"/>
    <property type="evidence" value="ECO:0000318"/>
    <property type="project" value="GO_Central"/>
</dbReference>
<dbReference type="GO" id="GO:0035460">
    <property type="term" value="F:L-ascorbate 6-phosphate lactonase activity"/>
    <property type="evidence" value="ECO:0007669"/>
    <property type="project" value="InterPro"/>
</dbReference>
<dbReference type="GO" id="GO:0030145">
    <property type="term" value="F:manganese ion binding"/>
    <property type="evidence" value="ECO:0007669"/>
    <property type="project" value="InterPro"/>
</dbReference>
<dbReference type="GO" id="GO:0019854">
    <property type="term" value="P:L-ascorbic acid catabolic process"/>
    <property type="evidence" value="ECO:0007669"/>
    <property type="project" value="UniProtKB-UniRule"/>
</dbReference>
<dbReference type="CDD" id="cd16284">
    <property type="entry name" value="UlaG-like_MBL-fold"/>
    <property type="match status" value="1"/>
</dbReference>
<dbReference type="FunFam" id="3.60.15.10:FF:000004">
    <property type="entry name" value="Probable L-ascorbate-6-phosphate lactonase UlaG"/>
    <property type="match status" value="1"/>
</dbReference>
<dbReference type="Gene3D" id="3.60.15.10">
    <property type="entry name" value="Ribonuclease Z/Hydroxyacylglutathione hydrolase-like"/>
    <property type="match status" value="1"/>
</dbReference>
<dbReference type="HAMAP" id="MF_01266">
    <property type="entry name" value="UlaG"/>
    <property type="match status" value="1"/>
</dbReference>
<dbReference type="InterPro" id="IPR023951">
    <property type="entry name" value="L-ascorbate_6P_UlaG"/>
</dbReference>
<dbReference type="InterPro" id="IPR001279">
    <property type="entry name" value="Metallo-B-lactamas"/>
</dbReference>
<dbReference type="InterPro" id="IPR036866">
    <property type="entry name" value="RibonucZ/Hydroxyglut_hydro"/>
</dbReference>
<dbReference type="InterPro" id="IPR048021">
    <property type="entry name" value="UlaG-like_MBL-fold"/>
</dbReference>
<dbReference type="InterPro" id="IPR050114">
    <property type="entry name" value="UPF0173_UPF0282_UlaG_hydrolase"/>
</dbReference>
<dbReference type="NCBIfam" id="NF008688">
    <property type="entry name" value="PRK11709.1"/>
    <property type="match status" value="1"/>
</dbReference>
<dbReference type="PANTHER" id="PTHR43546:SF9">
    <property type="entry name" value="L-ASCORBATE-6-PHOSPHATE LACTONASE ULAG-RELATED"/>
    <property type="match status" value="1"/>
</dbReference>
<dbReference type="PANTHER" id="PTHR43546">
    <property type="entry name" value="UPF0173 METAL-DEPENDENT HYDROLASE MJ1163-RELATED"/>
    <property type="match status" value="1"/>
</dbReference>
<dbReference type="Pfam" id="PF12706">
    <property type="entry name" value="Lactamase_B_2"/>
    <property type="match status" value="1"/>
</dbReference>
<dbReference type="SUPFAM" id="SSF56281">
    <property type="entry name" value="Metallo-hydrolase/oxidoreductase"/>
    <property type="match status" value="1"/>
</dbReference>